<dbReference type="EMBL" id="CU928164">
    <property type="protein sequence ID" value="CAR17471.1"/>
    <property type="molecule type" value="Genomic_DNA"/>
</dbReference>
<dbReference type="RefSeq" id="WP_001124225.1">
    <property type="nucleotide sequence ID" value="NC_011750.1"/>
</dbReference>
<dbReference type="RefSeq" id="YP_002407344.1">
    <property type="nucleotide sequence ID" value="NC_011750.1"/>
</dbReference>
<dbReference type="SMR" id="B7NT60"/>
<dbReference type="STRING" id="585057.ECIAI39_1337"/>
<dbReference type="GeneID" id="97601348"/>
<dbReference type="KEGG" id="ect:ECIAI39_1337"/>
<dbReference type="PATRIC" id="fig|585057.6.peg.1399"/>
<dbReference type="HOGENOM" id="CLU_169643_1_1_6"/>
<dbReference type="PRO" id="PR:B7NT60"/>
<dbReference type="Proteomes" id="UP000000749">
    <property type="component" value="Chromosome"/>
</dbReference>
<dbReference type="GO" id="GO:0022625">
    <property type="term" value="C:cytosolic large ribosomal subunit"/>
    <property type="evidence" value="ECO:0007669"/>
    <property type="project" value="TreeGrafter"/>
</dbReference>
<dbReference type="GO" id="GO:0003735">
    <property type="term" value="F:structural constituent of ribosome"/>
    <property type="evidence" value="ECO:0007669"/>
    <property type="project" value="InterPro"/>
</dbReference>
<dbReference type="GO" id="GO:0006412">
    <property type="term" value="P:translation"/>
    <property type="evidence" value="ECO:0007669"/>
    <property type="project" value="UniProtKB-UniRule"/>
</dbReference>
<dbReference type="FunFam" id="4.10.410.60:FF:000001">
    <property type="entry name" value="50S ribosomal protein L35"/>
    <property type="match status" value="1"/>
</dbReference>
<dbReference type="Gene3D" id="4.10.410.60">
    <property type="match status" value="1"/>
</dbReference>
<dbReference type="HAMAP" id="MF_00514">
    <property type="entry name" value="Ribosomal_bL35"/>
    <property type="match status" value="1"/>
</dbReference>
<dbReference type="InterPro" id="IPR001706">
    <property type="entry name" value="Ribosomal_bL35"/>
</dbReference>
<dbReference type="InterPro" id="IPR021137">
    <property type="entry name" value="Ribosomal_bL35-like"/>
</dbReference>
<dbReference type="InterPro" id="IPR018265">
    <property type="entry name" value="Ribosomal_bL35_CS"/>
</dbReference>
<dbReference type="InterPro" id="IPR037229">
    <property type="entry name" value="Ribosomal_bL35_sf"/>
</dbReference>
<dbReference type="NCBIfam" id="TIGR00001">
    <property type="entry name" value="rpmI_bact"/>
    <property type="match status" value="1"/>
</dbReference>
<dbReference type="PANTHER" id="PTHR33343">
    <property type="entry name" value="54S RIBOSOMAL PROTEIN BL35M"/>
    <property type="match status" value="1"/>
</dbReference>
<dbReference type="PANTHER" id="PTHR33343:SF1">
    <property type="entry name" value="LARGE RIBOSOMAL SUBUNIT PROTEIN BL35M"/>
    <property type="match status" value="1"/>
</dbReference>
<dbReference type="Pfam" id="PF01632">
    <property type="entry name" value="Ribosomal_L35p"/>
    <property type="match status" value="1"/>
</dbReference>
<dbReference type="PRINTS" id="PR00064">
    <property type="entry name" value="RIBOSOMALL35"/>
</dbReference>
<dbReference type="SUPFAM" id="SSF143034">
    <property type="entry name" value="L35p-like"/>
    <property type="match status" value="1"/>
</dbReference>
<dbReference type="PROSITE" id="PS00936">
    <property type="entry name" value="RIBOSOMAL_L35"/>
    <property type="match status" value="1"/>
</dbReference>
<organism>
    <name type="scientific">Escherichia coli O7:K1 (strain IAI39 / ExPEC)</name>
    <dbReference type="NCBI Taxonomy" id="585057"/>
    <lineage>
        <taxon>Bacteria</taxon>
        <taxon>Pseudomonadati</taxon>
        <taxon>Pseudomonadota</taxon>
        <taxon>Gammaproteobacteria</taxon>
        <taxon>Enterobacterales</taxon>
        <taxon>Enterobacteriaceae</taxon>
        <taxon>Escherichia</taxon>
    </lineage>
</organism>
<accession>B7NT60</accession>
<sequence>MPKIKTVRGAAKRFKKTGKGGFKHKHANLRHILTKKATKRKRHLRPKAMVSKGDLGLVIACLPYA</sequence>
<protein>
    <recommendedName>
        <fullName evidence="1">Large ribosomal subunit protein bL35</fullName>
    </recommendedName>
    <alternativeName>
        <fullName evidence="3">50S ribosomal protein L35</fullName>
    </alternativeName>
</protein>
<name>RL35_ECO7I</name>
<feature type="chain" id="PRO_1000127345" description="Large ribosomal subunit protein bL35">
    <location>
        <begin position="1"/>
        <end position="65"/>
    </location>
</feature>
<feature type="region of interest" description="Disordered" evidence="2">
    <location>
        <begin position="1"/>
        <end position="22"/>
    </location>
</feature>
<feature type="compositionally biased region" description="Basic residues" evidence="2">
    <location>
        <begin position="10"/>
        <end position="22"/>
    </location>
</feature>
<comment type="similarity">
    <text evidence="1">Belongs to the bacterial ribosomal protein bL35 family.</text>
</comment>
<gene>
    <name evidence="1" type="primary">rpmI</name>
    <name type="ordered locus">ECIAI39_1337</name>
</gene>
<evidence type="ECO:0000255" key="1">
    <source>
        <dbReference type="HAMAP-Rule" id="MF_00514"/>
    </source>
</evidence>
<evidence type="ECO:0000256" key="2">
    <source>
        <dbReference type="SAM" id="MobiDB-lite"/>
    </source>
</evidence>
<evidence type="ECO:0000305" key="3"/>
<reference key="1">
    <citation type="journal article" date="2009" name="PLoS Genet.">
        <title>Organised genome dynamics in the Escherichia coli species results in highly diverse adaptive paths.</title>
        <authorList>
            <person name="Touchon M."/>
            <person name="Hoede C."/>
            <person name="Tenaillon O."/>
            <person name="Barbe V."/>
            <person name="Baeriswyl S."/>
            <person name="Bidet P."/>
            <person name="Bingen E."/>
            <person name="Bonacorsi S."/>
            <person name="Bouchier C."/>
            <person name="Bouvet O."/>
            <person name="Calteau A."/>
            <person name="Chiapello H."/>
            <person name="Clermont O."/>
            <person name="Cruveiller S."/>
            <person name="Danchin A."/>
            <person name="Diard M."/>
            <person name="Dossat C."/>
            <person name="Karoui M.E."/>
            <person name="Frapy E."/>
            <person name="Garry L."/>
            <person name="Ghigo J.M."/>
            <person name="Gilles A.M."/>
            <person name="Johnson J."/>
            <person name="Le Bouguenec C."/>
            <person name="Lescat M."/>
            <person name="Mangenot S."/>
            <person name="Martinez-Jehanne V."/>
            <person name="Matic I."/>
            <person name="Nassif X."/>
            <person name="Oztas S."/>
            <person name="Petit M.A."/>
            <person name="Pichon C."/>
            <person name="Rouy Z."/>
            <person name="Ruf C.S."/>
            <person name="Schneider D."/>
            <person name="Tourret J."/>
            <person name="Vacherie B."/>
            <person name="Vallenet D."/>
            <person name="Medigue C."/>
            <person name="Rocha E.P.C."/>
            <person name="Denamur E."/>
        </authorList>
    </citation>
    <scope>NUCLEOTIDE SEQUENCE [LARGE SCALE GENOMIC DNA]</scope>
    <source>
        <strain>IAI39 / ExPEC</strain>
    </source>
</reference>
<proteinExistence type="inferred from homology"/>
<keyword id="KW-0687">Ribonucleoprotein</keyword>
<keyword id="KW-0689">Ribosomal protein</keyword>